<reference evidence="8 10" key="1">
    <citation type="journal article" date="2001" name="Genes Dev.">
        <title>A novel embryonic poly(A) binding protein, ePAB, regulates mRNA deadenylation in Xenopus egg extracts.</title>
        <authorList>
            <person name="Voeltz G.K."/>
            <person name="Ongkasuwan J."/>
            <person name="Standart N."/>
            <person name="Steitz J.A."/>
        </authorList>
    </citation>
    <scope>NUCLEOTIDE SEQUENCE [MRNA]</scope>
    <scope>PROTEIN SEQUENCE OF 97-104; 139-153 AND 168-174</scope>
    <scope>FUNCTION</scope>
    <scope>SUBCELLULAR LOCATION</scope>
    <scope>DEVELOPMENTAL STAGE</scope>
    <source>
        <tissue evidence="3">Ovary</tissue>
    </source>
</reference>
<reference evidence="9" key="2">
    <citation type="submission" date="2004-08" db="EMBL/GenBank/DDBJ databases">
        <authorList>
            <consortium name="NIH - Xenopus Gene Collection (XGC) project"/>
        </authorList>
    </citation>
    <scope>NUCLEOTIDE SEQUENCE [LARGE SCALE MRNA]</scope>
    <source>
        <tissue evidence="9">Kidney</tissue>
    </source>
</reference>
<reference evidence="8" key="3">
    <citation type="journal article" date="2002" name="Biol. Cell">
        <title>Characterization of the poly(A) binding proteins expressed during oogenesis and early development of Xenopus laevis.</title>
        <authorList>
            <person name="Cosson B."/>
            <person name="Couturier A."/>
            <person name="Le Guellec R."/>
            <person name="Moreau J."/>
            <person name="Chabelskaya S."/>
            <person name="Zhouravleva G."/>
            <person name="Philippe M."/>
        </authorList>
    </citation>
    <scope>FUNCTION</scope>
    <scope>INTERACTION WITH SUP35</scope>
    <scope>DEVELOPMENTAL STAGE</scope>
</reference>
<reference evidence="8" key="4">
    <citation type="journal article" date="2005" name="EMBO J.">
        <title>The DAZL family proteins are PABP-binding proteins that regulate translation in germ cells.</title>
        <authorList>
            <person name="Collier B."/>
            <person name="Gorgoni B."/>
            <person name="Loveridge C."/>
            <person name="Cooke H.J."/>
            <person name="Gray N.K."/>
        </authorList>
    </citation>
    <scope>INTERACTION WITH DAZL</scope>
</reference>
<reference evidence="8" key="5">
    <citation type="journal article" date="2005" name="Mol. Cell. Biol.">
        <title>Embryonic poly(A)-binding protein stimulates translation in germ cells.</title>
        <authorList>
            <person name="Wilkie G.S."/>
            <person name="Gautier P."/>
            <person name="Lawson D."/>
            <person name="Gray N.K."/>
        </authorList>
    </citation>
    <scope>FUNCTION</scope>
    <scope>INTERACTION WITH EIF4G1; PABPC1 AND PAIP1</scope>
    <scope>SUBCELLULAR LOCATION</scope>
    <scope>TISSUE SPECIFICITY</scope>
    <scope>DEVELOPMENTAL STAGE</scope>
</reference>
<reference evidence="8" key="6">
    <citation type="journal article" date="2006" name="Genes Dev.">
        <title>Regulated Pumilio-2 binding controls RINGO/Spy mRNA translation and CPEB activation.</title>
        <authorList>
            <person name="Padmanabhan K."/>
            <person name="Richter J.D."/>
        </authorList>
    </citation>
    <scope>IDENTIFICATION IN A COMPLEX WITH SPDY1; PUM2 AND DAZL</scope>
</reference>
<evidence type="ECO:0000255" key="1">
    <source>
        <dbReference type="PROSITE-ProRule" id="PRU00176"/>
    </source>
</evidence>
<evidence type="ECO:0000255" key="2">
    <source>
        <dbReference type="PROSITE-ProRule" id="PRU00641"/>
    </source>
</evidence>
<evidence type="ECO:0000269" key="3">
    <source>
    </source>
</evidence>
<evidence type="ECO:0000269" key="4">
    <source>
    </source>
</evidence>
<evidence type="ECO:0000269" key="5">
    <source>
    </source>
</evidence>
<evidence type="ECO:0000269" key="6">
    <source>
    </source>
</evidence>
<evidence type="ECO:0000269" key="7">
    <source>
    </source>
</evidence>
<evidence type="ECO:0000305" key="8"/>
<evidence type="ECO:0000312" key="9">
    <source>
        <dbReference type="EMBL" id="AAH80020.1"/>
    </source>
</evidence>
<evidence type="ECO:0000312" key="10">
    <source>
        <dbReference type="EMBL" id="AAK29408.1"/>
    </source>
</evidence>
<sequence length="629" mass="70704">MNATGAGYPLASLYIGDLHPDVTEAMLYEKFSPAGPIMSIRVCRDIATRRSLSYAYINFQQPADAERALDTMNFEVIKGRPIRIMWSQRDPGLRKSGVGNVFIKNLDESIDNKALYDTFSAFGNILSCKVVCDEHGSRGYGFVHFETHEAANRAIQTMNGMLLNDRKVFVGHFKSRRERELEYGAKVMEFTNVYIKNFGEDMDDKRLREIFSAFGNTLSVKVMMDDSGRSRGFGFVNYGNHEEAQKAVSEMNGKEVNGRMIYVGRAQKRIERQSELKRKFEQIKQERINRYQGVNLYVKNLDDGIDDDRLRKEFLPYGTITSAKVMTEGGHSKGFGFVCFSSPEEATKAVTEMNGRIVSTKPLYVALAQRKEERKAILTNQYMQRLATMRAMPGPLLGSFQQPANYFLSAMPQPPNRTFYSPNPVAPVRPAPQWASHQSRPPQYQPPTPLMRAVQPRRMSSNISTMKQASTQVPRVAQHSQRVANIGTQTAGARAQVNPSMMRTMPHYKYSCGVRNVQPIVSSTHLQQVMEPAVLMQGQEPLTASLLAGAPPQEQKQMLGERIYPVIHEMHPTLAGKITGMLLEIDNSELLHMLESPESLHSKVEEAVAVLQAHQAKENAQKSAQPSLI</sequence>
<gene>
    <name type="primary">epabp-a</name>
    <name evidence="10" type="synonym">epab</name>
</gene>
<proteinExistence type="evidence at protein level"/>
<organism>
    <name type="scientific">Xenopus laevis</name>
    <name type="common">African clawed frog</name>
    <dbReference type="NCBI Taxonomy" id="8355"/>
    <lineage>
        <taxon>Eukaryota</taxon>
        <taxon>Metazoa</taxon>
        <taxon>Chordata</taxon>
        <taxon>Craniata</taxon>
        <taxon>Vertebrata</taxon>
        <taxon>Euteleostomi</taxon>
        <taxon>Amphibia</taxon>
        <taxon>Batrachia</taxon>
        <taxon>Anura</taxon>
        <taxon>Pipoidea</taxon>
        <taxon>Pipidae</taxon>
        <taxon>Xenopodinae</taxon>
        <taxon>Xenopus</taxon>
        <taxon>Xenopus</taxon>
    </lineage>
</organism>
<keyword id="KW-0963">Cytoplasm</keyword>
<keyword id="KW-0903">Direct protein sequencing</keyword>
<keyword id="KW-0507">mRNA processing</keyword>
<keyword id="KW-0648">Protein biosynthesis</keyword>
<keyword id="KW-1185">Reference proteome</keyword>
<keyword id="KW-0677">Repeat</keyword>
<keyword id="KW-0694">RNA-binding</keyword>
<protein>
    <recommendedName>
        <fullName>Embryonic polyadenylate-binding protein A</fullName>
        <shortName>Embryonic poly(A)-binding protein A</shortName>
        <shortName>ePAB-A</shortName>
        <shortName>ePABP-A</shortName>
    </recommendedName>
    <alternativeName>
        <fullName>XePABP-A</fullName>
    </alternativeName>
</protein>
<comment type="function">
    <text evidence="3 4 5">Binds and protects the poly(A) tail of mRNA with or without an AU-rich element (ARE) and prevents mRNA deadenylation. Stimulates the translation of mRNAs to which it is bound during early development.</text>
</comment>
<comment type="subunit">
    <text evidence="4 5 6 7">Interacts with dazl in an RNA-independent manner. The C-terminus can self-associate and also interact with the C-terminus of pabpc1, independently of RNA. RRM 1 and RRM 2 interact with both eif4g1 and paip1, and the C-terminus also interacts with paip1. Prior to oocyte maturation, found in a complex with dazl and pum2 proteins and spdy1 mRNA; pum2 dissociates from the complex during maturation. Interacts with the translation termination factor sup35/erf3.</text>
</comment>
<comment type="interaction">
    <interactant intactId="EBI-7191347">
        <id>Q98SP8</id>
    </interactant>
    <interactant intactId="EBI-619004">
        <id>O73932</id>
        <label>igf2bp3-a</label>
    </interactant>
    <organismsDiffer>false</organismsDiffer>
    <experiments>2</experiments>
</comment>
<comment type="interaction">
    <interactant intactId="EBI-7191347">
        <id>Q98SP8</id>
    </interactant>
    <interactant intactId="EBI-7191401">
        <id>A8KBF3</id>
        <label>piwil2</label>
    </interactant>
    <organismsDiffer>true</organismsDiffer>
    <experiments>3</experiments>
</comment>
<comment type="subcellular location">
    <subcellularLocation>
        <location evidence="3 5">Cytoplasm</location>
    </subcellularLocation>
    <text>Associated with polysomes.</text>
</comment>
<comment type="tissue specificity">
    <text evidence="5">Expressed in adult testis, but at a reduced level compared to oocytes.</text>
</comment>
<comment type="developmental stage">
    <text evidence="3 4 5">Predominant from the stage VI oocyte through to the neurula stage (30 hours embryo), with levels decreasing at the onset of zygotic transcription.</text>
</comment>
<comment type="similarity">
    <text evidence="8">Belongs to the polyadenylate-binding protein type-1 family.</text>
</comment>
<dbReference type="EMBL" id="AF338225">
    <property type="protein sequence ID" value="AAK29408.1"/>
    <property type="molecule type" value="mRNA"/>
</dbReference>
<dbReference type="EMBL" id="BC080020">
    <property type="protein sequence ID" value="AAH80020.1"/>
    <property type="molecule type" value="mRNA"/>
</dbReference>
<dbReference type="RefSeq" id="NP_001082094.1">
    <property type="nucleotide sequence ID" value="NM_001088625.1"/>
</dbReference>
<dbReference type="RefSeq" id="XP_018092825.1">
    <property type="nucleotide sequence ID" value="XM_018237336.1"/>
</dbReference>
<dbReference type="SMR" id="Q98SP8"/>
<dbReference type="BioGRID" id="99556">
    <property type="interactions" value="2"/>
</dbReference>
<dbReference type="IntAct" id="Q98SP8">
    <property type="interactions" value="3"/>
</dbReference>
<dbReference type="MINT" id="Q98SP8"/>
<dbReference type="DNASU" id="398221"/>
<dbReference type="GeneID" id="398221"/>
<dbReference type="KEGG" id="xla:398221"/>
<dbReference type="AGR" id="Xenbase:XB-GENE-5742498"/>
<dbReference type="CTD" id="398221"/>
<dbReference type="Xenbase" id="XB-GENE-5742498">
    <property type="gene designation" value="pabpc1l.S"/>
</dbReference>
<dbReference type="OrthoDB" id="19742at2759"/>
<dbReference type="Proteomes" id="UP000186698">
    <property type="component" value="Chromosome 9_10S"/>
</dbReference>
<dbReference type="Bgee" id="398221">
    <property type="expression patterns" value="Expressed in ovary and 8 other cell types or tissues"/>
</dbReference>
<dbReference type="GO" id="GO:0005737">
    <property type="term" value="C:cytoplasm"/>
    <property type="evidence" value="ECO:0000314"/>
    <property type="project" value="UniProtKB"/>
</dbReference>
<dbReference type="GO" id="GO:0010494">
    <property type="term" value="C:cytoplasmic stress granule"/>
    <property type="evidence" value="ECO:0000318"/>
    <property type="project" value="GO_Central"/>
</dbReference>
<dbReference type="GO" id="GO:0005829">
    <property type="term" value="C:cytosol"/>
    <property type="evidence" value="ECO:0000318"/>
    <property type="project" value="GO_Central"/>
</dbReference>
<dbReference type="GO" id="GO:0005634">
    <property type="term" value="C:nucleus"/>
    <property type="evidence" value="ECO:0000318"/>
    <property type="project" value="GO_Central"/>
</dbReference>
<dbReference type="GO" id="GO:1990904">
    <property type="term" value="C:ribonucleoprotein complex"/>
    <property type="evidence" value="ECO:0000318"/>
    <property type="project" value="GO_Central"/>
</dbReference>
<dbReference type="GO" id="GO:0031370">
    <property type="term" value="F:eukaryotic initiation factor 4G binding"/>
    <property type="evidence" value="ECO:0000353"/>
    <property type="project" value="UniProtKB"/>
</dbReference>
<dbReference type="GO" id="GO:0003730">
    <property type="term" value="F:mRNA 3'-UTR binding"/>
    <property type="evidence" value="ECO:0000318"/>
    <property type="project" value="GO_Central"/>
</dbReference>
<dbReference type="GO" id="GO:0008143">
    <property type="term" value="F:poly(A) binding"/>
    <property type="evidence" value="ECO:0000314"/>
    <property type="project" value="UniProtKB"/>
</dbReference>
<dbReference type="GO" id="GO:0008266">
    <property type="term" value="F:poly(U) RNA binding"/>
    <property type="evidence" value="ECO:0000318"/>
    <property type="project" value="GO_Central"/>
</dbReference>
<dbReference type="GO" id="GO:0043009">
    <property type="term" value="P:chordate embryonic development"/>
    <property type="evidence" value="ECO:0000270"/>
    <property type="project" value="UniProtKB"/>
</dbReference>
<dbReference type="GO" id="GO:0006397">
    <property type="term" value="P:mRNA processing"/>
    <property type="evidence" value="ECO:0007669"/>
    <property type="project" value="UniProtKB-KW"/>
</dbReference>
<dbReference type="GO" id="GO:0048255">
    <property type="term" value="P:mRNA stabilization"/>
    <property type="evidence" value="ECO:0000314"/>
    <property type="project" value="UniProtKB"/>
</dbReference>
<dbReference type="GO" id="GO:0060212">
    <property type="term" value="P:negative regulation of nuclear-transcribed mRNA poly(A) tail shortening"/>
    <property type="evidence" value="ECO:0000314"/>
    <property type="project" value="UniProtKB"/>
</dbReference>
<dbReference type="GO" id="GO:0006412">
    <property type="term" value="P:translation"/>
    <property type="evidence" value="ECO:0007669"/>
    <property type="project" value="UniProtKB-KW"/>
</dbReference>
<dbReference type="CDD" id="cd12378">
    <property type="entry name" value="RRM1_I_PABPs"/>
    <property type="match status" value="1"/>
</dbReference>
<dbReference type="CDD" id="cd12379">
    <property type="entry name" value="RRM2_I_PABPs"/>
    <property type="match status" value="1"/>
</dbReference>
<dbReference type="CDD" id="cd12380">
    <property type="entry name" value="RRM3_I_PABPs"/>
    <property type="match status" value="1"/>
</dbReference>
<dbReference type="CDD" id="cd12381">
    <property type="entry name" value="RRM4_I_PABPs"/>
    <property type="match status" value="1"/>
</dbReference>
<dbReference type="FunFam" id="1.10.1900.10:FF:000001">
    <property type="entry name" value="Polyadenylate-binding protein"/>
    <property type="match status" value="1"/>
</dbReference>
<dbReference type="FunFam" id="3.30.70.330:FF:000003">
    <property type="entry name" value="Polyadenylate-binding protein"/>
    <property type="match status" value="1"/>
</dbReference>
<dbReference type="FunFam" id="3.30.70.330:FF:000021">
    <property type="entry name" value="Polyadenylate-binding protein"/>
    <property type="match status" value="1"/>
</dbReference>
<dbReference type="FunFam" id="3.30.70.330:FF:000042">
    <property type="entry name" value="Polyadenylate-binding protein"/>
    <property type="match status" value="1"/>
</dbReference>
<dbReference type="FunFam" id="3.30.70.330:FF:000049">
    <property type="entry name" value="Polyadenylate-binding protein"/>
    <property type="match status" value="1"/>
</dbReference>
<dbReference type="Gene3D" id="3.30.70.330">
    <property type="match status" value="4"/>
</dbReference>
<dbReference type="Gene3D" id="1.10.1900.10">
    <property type="entry name" value="c-terminal domain of poly(a) binding protein"/>
    <property type="match status" value="1"/>
</dbReference>
<dbReference type="InterPro" id="IPR012677">
    <property type="entry name" value="Nucleotide-bd_a/b_plait_sf"/>
</dbReference>
<dbReference type="InterPro" id="IPR036053">
    <property type="entry name" value="PABP-dom"/>
</dbReference>
<dbReference type="InterPro" id="IPR006515">
    <property type="entry name" value="PABP_1234"/>
</dbReference>
<dbReference type="InterPro" id="IPR002004">
    <property type="entry name" value="PABP_HYD_C"/>
</dbReference>
<dbReference type="InterPro" id="IPR034364">
    <property type="entry name" value="PABP_RRM1"/>
</dbReference>
<dbReference type="InterPro" id="IPR035979">
    <property type="entry name" value="RBD_domain_sf"/>
</dbReference>
<dbReference type="InterPro" id="IPR045305">
    <property type="entry name" value="RRM2_I_PABPs"/>
</dbReference>
<dbReference type="InterPro" id="IPR000504">
    <property type="entry name" value="RRM_dom"/>
</dbReference>
<dbReference type="InterPro" id="IPR003954">
    <property type="entry name" value="RRM_dom_euk"/>
</dbReference>
<dbReference type="NCBIfam" id="TIGR01628">
    <property type="entry name" value="PABP-1234"/>
    <property type="match status" value="1"/>
</dbReference>
<dbReference type="PANTHER" id="PTHR24012">
    <property type="entry name" value="RNA BINDING PROTEIN"/>
    <property type="match status" value="1"/>
</dbReference>
<dbReference type="Pfam" id="PF00658">
    <property type="entry name" value="MLLE"/>
    <property type="match status" value="1"/>
</dbReference>
<dbReference type="Pfam" id="PF00076">
    <property type="entry name" value="RRM_1"/>
    <property type="match status" value="4"/>
</dbReference>
<dbReference type="SMART" id="SM00517">
    <property type="entry name" value="PolyA"/>
    <property type="match status" value="1"/>
</dbReference>
<dbReference type="SMART" id="SM00360">
    <property type="entry name" value="RRM"/>
    <property type="match status" value="4"/>
</dbReference>
<dbReference type="SMART" id="SM00361">
    <property type="entry name" value="RRM_1"/>
    <property type="match status" value="3"/>
</dbReference>
<dbReference type="SUPFAM" id="SSF63570">
    <property type="entry name" value="PABC (PABP) domain"/>
    <property type="match status" value="1"/>
</dbReference>
<dbReference type="SUPFAM" id="SSF54928">
    <property type="entry name" value="RNA-binding domain, RBD"/>
    <property type="match status" value="2"/>
</dbReference>
<dbReference type="PROSITE" id="PS51309">
    <property type="entry name" value="PABC"/>
    <property type="match status" value="1"/>
</dbReference>
<dbReference type="PROSITE" id="PS50102">
    <property type="entry name" value="RRM"/>
    <property type="match status" value="4"/>
</dbReference>
<name>EPABA_XENLA</name>
<accession>Q98SP8</accession>
<accession>Q68F25</accession>
<feature type="chain" id="PRO_0000233954" description="Embryonic polyadenylate-binding protein A">
    <location>
        <begin position="1"/>
        <end position="629"/>
    </location>
</feature>
<feature type="domain" description="RRM 1" evidence="1">
    <location>
        <begin position="11"/>
        <end position="89"/>
    </location>
</feature>
<feature type="domain" description="RRM 2" evidence="1">
    <location>
        <begin position="99"/>
        <end position="175"/>
    </location>
</feature>
<feature type="domain" description="RRM 3" evidence="1">
    <location>
        <begin position="191"/>
        <end position="268"/>
    </location>
</feature>
<feature type="domain" description="RRM 4" evidence="1">
    <location>
        <begin position="294"/>
        <end position="370"/>
    </location>
</feature>
<feature type="domain" description="PABC" evidence="2">
    <location>
        <begin position="539"/>
        <end position="616"/>
    </location>
</feature>
<feature type="sequence conflict" description="In Ref. 1; AAK29408." evidence="8" ref="1">
    <original>P</original>
    <variation>L</variation>
    <location>
        <position position="552"/>
    </location>
</feature>